<organism>
    <name type="scientific">Rhizobium leguminosarum bv. trifolii (strain WSM2304)</name>
    <dbReference type="NCBI Taxonomy" id="395492"/>
    <lineage>
        <taxon>Bacteria</taxon>
        <taxon>Pseudomonadati</taxon>
        <taxon>Pseudomonadota</taxon>
        <taxon>Alphaproteobacteria</taxon>
        <taxon>Hyphomicrobiales</taxon>
        <taxon>Rhizobiaceae</taxon>
        <taxon>Rhizobium/Agrobacterium group</taxon>
        <taxon>Rhizobium</taxon>
    </lineage>
</organism>
<accession>B5ZYU6</accession>
<dbReference type="EMBL" id="CP001191">
    <property type="protein sequence ID" value="ACI54637.1"/>
    <property type="molecule type" value="Genomic_DNA"/>
</dbReference>
<dbReference type="RefSeq" id="WP_003587195.1">
    <property type="nucleotide sequence ID" value="NC_011369.1"/>
</dbReference>
<dbReference type="SMR" id="B5ZYU6"/>
<dbReference type="STRING" id="395492.Rleg2_1343"/>
<dbReference type="GeneID" id="75219570"/>
<dbReference type="KEGG" id="rlt:Rleg2_1343"/>
<dbReference type="eggNOG" id="COG0198">
    <property type="taxonomic scope" value="Bacteria"/>
</dbReference>
<dbReference type="HOGENOM" id="CLU_093315_2_2_5"/>
<dbReference type="Proteomes" id="UP000008330">
    <property type="component" value="Chromosome"/>
</dbReference>
<dbReference type="GO" id="GO:1990904">
    <property type="term" value="C:ribonucleoprotein complex"/>
    <property type="evidence" value="ECO:0007669"/>
    <property type="project" value="UniProtKB-KW"/>
</dbReference>
<dbReference type="GO" id="GO:0005840">
    <property type="term" value="C:ribosome"/>
    <property type="evidence" value="ECO:0007669"/>
    <property type="project" value="UniProtKB-KW"/>
</dbReference>
<dbReference type="GO" id="GO:0019843">
    <property type="term" value="F:rRNA binding"/>
    <property type="evidence" value="ECO:0007669"/>
    <property type="project" value="UniProtKB-UniRule"/>
</dbReference>
<dbReference type="GO" id="GO:0003735">
    <property type="term" value="F:structural constituent of ribosome"/>
    <property type="evidence" value="ECO:0007669"/>
    <property type="project" value="InterPro"/>
</dbReference>
<dbReference type="GO" id="GO:0006412">
    <property type="term" value="P:translation"/>
    <property type="evidence" value="ECO:0007669"/>
    <property type="project" value="UniProtKB-UniRule"/>
</dbReference>
<dbReference type="CDD" id="cd06089">
    <property type="entry name" value="KOW_RPL26"/>
    <property type="match status" value="1"/>
</dbReference>
<dbReference type="FunFam" id="2.30.30.30:FF:000004">
    <property type="entry name" value="50S ribosomal protein L24"/>
    <property type="match status" value="1"/>
</dbReference>
<dbReference type="Gene3D" id="2.30.30.30">
    <property type="match status" value="1"/>
</dbReference>
<dbReference type="HAMAP" id="MF_01326_B">
    <property type="entry name" value="Ribosomal_uL24_B"/>
    <property type="match status" value="1"/>
</dbReference>
<dbReference type="InterPro" id="IPR005824">
    <property type="entry name" value="KOW"/>
</dbReference>
<dbReference type="InterPro" id="IPR014722">
    <property type="entry name" value="Rib_uL2_dom2"/>
</dbReference>
<dbReference type="InterPro" id="IPR003256">
    <property type="entry name" value="Ribosomal_uL24"/>
</dbReference>
<dbReference type="InterPro" id="IPR041988">
    <property type="entry name" value="Ribosomal_uL24_KOW"/>
</dbReference>
<dbReference type="InterPro" id="IPR008991">
    <property type="entry name" value="Translation_prot_SH3-like_sf"/>
</dbReference>
<dbReference type="NCBIfam" id="TIGR01079">
    <property type="entry name" value="rplX_bact"/>
    <property type="match status" value="1"/>
</dbReference>
<dbReference type="PANTHER" id="PTHR12903">
    <property type="entry name" value="MITOCHONDRIAL RIBOSOMAL PROTEIN L24"/>
    <property type="match status" value="1"/>
</dbReference>
<dbReference type="Pfam" id="PF00467">
    <property type="entry name" value="KOW"/>
    <property type="match status" value="1"/>
</dbReference>
<dbReference type="Pfam" id="PF17136">
    <property type="entry name" value="ribosomal_L24"/>
    <property type="match status" value="1"/>
</dbReference>
<dbReference type="SMART" id="SM00739">
    <property type="entry name" value="KOW"/>
    <property type="match status" value="1"/>
</dbReference>
<dbReference type="SUPFAM" id="SSF50104">
    <property type="entry name" value="Translation proteins SH3-like domain"/>
    <property type="match status" value="1"/>
</dbReference>
<comment type="function">
    <text evidence="1">One of two assembly initiator proteins, it binds directly to the 5'-end of the 23S rRNA, where it nucleates assembly of the 50S subunit.</text>
</comment>
<comment type="function">
    <text evidence="1">One of the proteins that surrounds the polypeptide exit tunnel on the outside of the subunit.</text>
</comment>
<comment type="subunit">
    <text evidence="1">Part of the 50S ribosomal subunit.</text>
</comment>
<comment type="similarity">
    <text evidence="1">Belongs to the universal ribosomal protein uL24 family.</text>
</comment>
<proteinExistence type="inferred from homology"/>
<keyword id="KW-1185">Reference proteome</keyword>
<keyword id="KW-0687">Ribonucleoprotein</keyword>
<keyword id="KW-0689">Ribosomal protein</keyword>
<keyword id="KW-0694">RNA-binding</keyword>
<keyword id="KW-0699">rRNA-binding</keyword>
<reference key="1">
    <citation type="journal article" date="2010" name="Stand. Genomic Sci.">
        <title>Complete genome sequence of Rhizobium leguminosarum bv trifolii strain WSM2304, an effective microsymbiont of the South American clover Trifolium polymorphum.</title>
        <authorList>
            <person name="Reeve W."/>
            <person name="O'Hara G."/>
            <person name="Chain P."/>
            <person name="Ardley J."/>
            <person name="Brau L."/>
            <person name="Nandesena K."/>
            <person name="Tiwari R."/>
            <person name="Malfatti S."/>
            <person name="Kiss H."/>
            <person name="Lapidus A."/>
            <person name="Copeland A."/>
            <person name="Nolan M."/>
            <person name="Land M."/>
            <person name="Ivanova N."/>
            <person name="Mavromatis K."/>
            <person name="Markowitz V."/>
            <person name="Kyrpides N."/>
            <person name="Melino V."/>
            <person name="Denton M."/>
            <person name="Yates R."/>
            <person name="Howieson J."/>
        </authorList>
    </citation>
    <scope>NUCLEOTIDE SEQUENCE [LARGE SCALE GENOMIC DNA]</scope>
    <source>
        <strain>WSM2304</strain>
    </source>
</reference>
<sequence length="102" mass="11185">MQKIRKGDKVVMLAGKDKGRTGEVVQVMPKEDRAVVRGVNVVKRHQRQTQTQEAGIINKEASVHLSNVAIVDKDGKPTRVGFKVVDGKKVRVAKRSGEVIDG</sequence>
<name>RL24_RHILW</name>
<feature type="chain" id="PRO_1000142028" description="Large ribosomal subunit protein uL24">
    <location>
        <begin position="1"/>
        <end position="102"/>
    </location>
</feature>
<protein>
    <recommendedName>
        <fullName evidence="1">Large ribosomal subunit protein uL24</fullName>
    </recommendedName>
    <alternativeName>
        <fullName evidence="2">50S ribosomal protein L24</fullName>
    </alternativeName>
</protein>
<evidence type="ECO:0000255" key="1">
    <source>
        <dbReference type="HAMAP-Rule" id="MF_01326"/>
    </source>
</evidence>
<evidence type="ECO:0000305" key="2"/>
<gene>
    <name evidence="1" type="primary">rplX</name>
    <name type="ordered locus">Rleg2_1343</name>
</gene>